<name>HLDE_GLUOX</name>
<comment type="function">
    <text evidence="1">Catalyzes the phosphorylation of D-glycero-D-manno-heptose 7-phosphate at the C-1 position to selectively form D-glycero-beta-D-manno-heptose-1,7-bisphosphate.</text>
</comment>
<comment type="function">
    <text evidence="1">Catalyzes the ADP transfer from ATP to D-glycero-beta-D-manno-heptose 1-phosphate, yielding ADP-D-glycero-beta-D-manno-heptose.</text>
</comment>
<comment type="catalytic activity">
    <reaction evidence="1">
        <text>D-glycero-beta-D-manno-heptose 7-phosphate + ATP = D-glycero-beta-D-manno-heptose 1,7-bisphosphate + ADP + H(+)</text>
        <dbReference type="Rhea" id="RHEA:27473"/>
        <dbReference type="ChEBI" id="CHEBI:15378"/>
        <dbReference type="ChEBI" id="CHEBI:30616"/>
        <dbReference type="ChEBI" id="CHEBI:60204"/>
        <dbReference type="ChEBI" id="CHEBI:60208"/>
        <dbReference type="ChEBI" id="CHEBI:456216"/>
        <dbReference type="EC" id="2.7.1.167"/>
    </reaction>
</comment>
<comment type="catalytic activity">
    <reaction evidence="1">
        <text>D-glycero-beta-D-manno-heptose 1-phosphate + ATP + H(+) = ADP-D-glycero-beta-D-manno-heptose + diphosphate</text>
        <dbReference type="Rhea" id="RHEA:27465"/>
        <dbReference type="ChEBI" id="CHEBI:15378"/>
        <dbReference type="ChEBI" id="CHEBI:30616"/>
        <dbReference type="ChEBI" id="CHEBI:33019"/>
        <dbReference type="ChEBI" id="CHEBI:59967"/>
        <dbReference type="ChEBI" id="CHEBI:61593"/>
        <dbReference type="EC" id="2.7.7.70"/>
    </reaction>
</comment>
<comment type="pathway">
    <text evidence="1">Nucleotide-sugar biosynthesis; ADP-L-glycero-beta-D-manno-heptose biosynthesis; ADP-L-glycero-beta-D-manno-heptose from D-glycero-beta-D-manno-heptose 7-phosphate: step 1/4.</text>
</comment>
<comment type="pathway">
    <text evidence="1">Nucleotide-sugar biosynthesis; ADP-L-glycero-beta-D-manno-heptose biosynthesis; ADP-L-glycero-beta-D-manno-heptose from D-glycero-beta-D-manno-heptose 7-phosphate: step 3/4.</text>
</comment>
<comment type="subunit">
    <text evidence="1">Homodimer.</text>
</comment>
<comment type="similarity">
    <text evidence="1">In the N-terminal section; belongs to the carbohydrate kinase PfkB family.</text>
</comment>
<comment type="similarity">
    <text evidence="1">In the C-terminal section; belongs to the cytidylyltransferase family.</text>
</comment>
<feature type="chain" id="PRO_0000255760" description="Bifunctional protein HldE">
    <location>
        <begin position="1"/>
        <end position="479"/>
    </location>
</feature>
<feature type="region of interest" description="Ribokinase">
    <location>
        <begin position="1"/>
        <end position="322"/>
    </location>
</feature>
<feature type="region of interest" description="Cytidylyltransferase">
    <location>
        <begin position="347"/>
        <end position="479"/>
    </location>
</feature>
<feature type="active site" evidence="1">
    <location>
        <position position="267"/>
    </location>
</feature>
<feature type="binding site" evidence="1">
    <location>
        <begin position="198"/>
        <end position="201"/>
    </location>
    <ligand>
        <name>ATP</name>
        <dbReference type="ChEBI" id="CHEBI:30616"/>
    </ligand>
</feature>
<sequence length="479" mass="50977">MIDDFRFGRITVIGDLLLDQYISGGVSRISPEAPVPVVLHDGLRCVPGGAANVAVNAAALGAQVHLVGLVGEDDSAARLKETLKLWPTIETDGIVSSPDWTTITKTRVVSGRQQIVRIDVEKLTPLSETLQQRLVEEACRAIAVSDVLVCSDYAKGVLTDEVLRAIIAAGREKGIPVIVDPKRHTFEAYAGATLVTPNRIEAQQASGLPARTDGEVLKVAETLSGQFGGNVLVTRSEDGMTLWQHDAKPLHVASRKSEVFDVSGAGDTVVATVAAVLSAGQTLETAVVIATAAAALSVSKFGTATVSREELSRELLQEMPETGALVPVEQAARIVESWHRHGAKVVFTNGCFDLVHPGHVSLLQAAAREGDRLVVALNTDRSVSRLKGPTRPVQKEEARARVIGALRSVDLVVLFDEDTPLEVIRTLKPDILVKGADYTEDQVVGADVVKSYGGKVVLVDLVEGQSTTRLVRGMQSAPS</sequence>
<reference key="1">
    <citation type="journal article" date="2005" name="Nat. Biotechnol.">
        <title>Complete genome sequence of the acetic acid bacterium Gluconobacter oxydans.</title>
        <authorList>
            <person name="Prust C."/>
            <person name="Hoffmeister M."/>
            <person name="Liesegang H."/>
            <person name="Wiezer A."/>
            <person name="Fricke W.F."/>
            <person name="Ehrenreich A."/>
            <person name="Gottschalk G."/>
            <person name="Deppenmeier U."/>
        </authorList>
    </citation>
    <scope>NUCLEOTIDE SEQUENCE [LARGE SCALE GENOMIC DNA]</scope>
    <source>
        <strain>621H</strain>
    </source>
</reference>
<keyword id="KW-0067">ATP-binding</keyword>
<keyword id="KW-0119">Carbohydrate metabolism</keyword>
<keyword id="KW-0418">Kinase</keyword>
<keyword id="KW-0511">Multifunctional enzyme</keyword>
<keyword id="KW-0547">Nucleotide-binding</keyword>
<keyword id="KW-0548">Nucleotidyltransferase</keyword>
<keyword id="KW-1185">Reference proteome</keyword>
<keyword id="KW-0808">Transferase</keyword>
<gene>
    <name evidence="1" type="primary">hldE</name>
    <name type="ordered locus">GOX1023</name>
</gene>
<protein>
    <recommendedName>
        <fullName evidence="1">Bifunctional protein HldE</fullName>
    </recommendedName>
    <domain>
        <recommendedName>
            <fullName evidence="1">D-beta-D-heptose 7-phosphate kinase</fullName>
            <ecNumber evidence="1">2.7.1.167</ecNumber>
        </recommendedName>
        <alternativeName>
            <fullName evidence="1">D-beta-D-heptose 7-phosphotransferase</fullName>
        </alternativeName>
        <alternativeName>
            <fullName evidence="1">D-glycero-beta-D-manno-heptose-7-phosphate kinase</fullName>
        </alternativeName>
    </domain>
    <domain>
        <recommendedName>
            <fullName evidence="1">D-beta-D-heptose 1-phosphate adenylyltransferase</fullName>
            <ecNumber evidence="1">2.7.7.70</ecNumber>
        </recommendedName>
        <alternativeName>
            <fullName evidence="1">D-glycero-beta-D-manno-heptose 1-phosphate adenylyltransferase</fullName>
        </alternativeName>
    </domain>
</protein>
<organism>
    <name type="scientific">Gluconobacter oxydans (strain 621H)</name>
    <name type="common">Gluconobacter suboxydans</name>
    <dbReference type="NCBI Taxonomy" id="290633"/>
    <lineage>
        <taxon>Bacteria</taxon>
        <taxon>Pseudomonadati</taxon>
        <taxon>Pseudomonadota</taxon>
        <taxon>Alphaproteobacteria</taxon>
        <taxon>Acetobacterales</taxon>
        <taxon>Acetobacteraceae</taxon>
        <taxon>Gluconobacter</taxon>
    </lineage>
</organism>
<proteinExistence type="inferred from homology"/>
<accession>Q5FS52</accession>
<evidence type="ECO:0000255" key="1">
    <source>
        <dbReference type="HAMAP-Rule" id="MF_01603"/>
    </source>
</evidence>
<dbReference type="EC" id="2.7.1.167" evidence="1"/>
<dbReference type="EC" id="2.7.7.70" evidence="1"/>
<dbReference type="EMBL" id="CP000009">
    <property type="protein sequence ID" value="AAW60794.1"/>
    <property type="molecule type" value="Genomic_DNA"/>
</dbReference>
<dbReference type="RefSeq" id="WP_011252587.1">
    <property type="nucleotide sequence ID" value="NC_006677.1"/>
</dbReference>
<dbReference type="SMR" id="Q5FS52"/>
<dbReference type="STRING" id="290633.GOX1023"/>
<dbReference type="KEGG" id="gox:GOX1023"/>
<dbReference type="eggNOG" id="COG0615">
    <property type="taxonomic scope" value="Bacteria"/>
</dbReference>
<dbReference type="eggNOG" id="COG2870">
    <property type="taxonomic scope" value="Bacteria"/>
</dbReference>
<dbReference type="HOGENOM" id="CLU_021150_2_1_5"/>
<dbReference type="UniPathway" id="UPA00356">
    <property type="reaction ID" value="UER00437"/>
</dbReference>
<dbReference type="UniPathway" id="UPA00356">
    <property type="reaction ID" value="UER00439"/>
</dbReference>
<dbReference type="Proteomes" id="UP000006375">
    <property type="component" value="Chromosome"/>
</dbReference>
<dbReference type="GO" id="GO:0005829">
    <property type="term" value="C:cytosol"/>
    <property type="evidence" value="ECO:0007669"/>
    <property type="project" value="TreeGrafter"/>
</dbReference>
<dbReference type="GO" id="GO:0005524">
    <property type="term" value="F:ATP binding"/>
    <property type="evidence" value="ECO:0007669"/>
    <property type="project" value="UniProtKB-UniRule"/>
</dbReference>
<dbReference type="GO" id="GO:0033785">
    <property type="term" value="F:heptose 7-phosphate kinase activity"/>
    <property type="evidence" value="ECO:0007669"/>
    <property type="project" value="UniProtKB-UniRule"/>
</dbReference>
<dbReference type="GO" id="GO:0033786">
    <property type="term" value="F:heptose-1-phosphate adenylyltransferase activity"/>
    <property type="evidence" value="ECO:0007669"/>
    <property type="project" value="UniProtKB-UniRule"/>
</dbReference>
<dbReference type="GO" id="GO:0016773">
    <property type="term" value="F:phosphotransferase activity, alcohol group as acceptor"/>
    <property type="evidence" value="ECO:0007669"/>
    <property type="project" value="InterPro"/>
</dbReference>
<dbReference type="GO" id="GO:0097171">
    <property type="term" value="P:ADP-L-glycero-beta-D-manno-heptose biosynthetic process"/>
    <property type="evidence" value="ECO:0007669"/>
    <property type="project" value="UniProtKB-UniPathway"/>
</dbReference>
<dbReference type="CDD" id="cd01172">
    <property type="entry name" value="RfaE_like"/>
    <property type="match status" value="1"/>
</dbReference>
<dbReference type="FunFam" id="3.40.1190.20:FF:000002">
    <property type="entry name" value="Bifunctional protein HldE"/>
    <property type="match status" value="1"/>
</dbReference>
<dbReference type="Gene3D" id="3.40.1190.20">
    <property type="match status" value="1"/>
</dbReference>
<dbReference type="Gene3D" id="3.40.50.620">
    <property type="entry name" value="HUPs"/>
    <property type="match status" value="1"/>
</dbReference>
<dbReference type="HAMAP" id="MF_01603">
    <property type="entry name" value="HldE"/>
    <property type="match status" value="1"/>
</dbReference>
<dbReference type="InterPro" id="IPR023030">
    <property type="entry name" value="Bifunc_HldE"/>
</dbReference>
<dbReference type="InterPro" id="IPR004821">
    <property type="entry name" value="Cyt_trans-like"/>
</dbReference>
<dbReference type="InterPro" id="IPR011611">
    <property type="entry name" value="PfkB_dom"/>
</dbReference>
<dbReference type="InterPro" id="IPR011913">
    <property type="entry name" value="RfaE_dom_I"/>
</dbReference>
<dbReference type="InterPro" id="IPR011914">
    <property type="entry name" value="RfaE_dom_II"/>
</dbReference>
<dbReference type="InterPro" id="IPR029056">
    <property type="entry name" value="Ribokinase-like"/>
</dbReference>
<dbReference type="InterPro" id="IPR014729">
    <property type="entry name" value="Rossmann-like_a/b/a_fold"/>
</dbReference>
<dbReference type="NCBIfam" id="TIGR00125">
    <property type="entry name" value="cyt_tran_rel"/>
    <property type="match status" value="1"/>
</dbReference>
<dbReference type="NCBIfam" id="TIGR02198">
    <property type="entry name" value="rfaE_dom_I"/>
    <property type="match status" value="1"/>
</dbReference>
<dbReference type="NCBIfam" id="TIGR02199">
    <property type="entry name" value="rfaE_dom_II"/>
    <property type="match status" value="1"/>
</dbReference>
<dbReference type="PANTHER" id="PTHR46969">
    <property type="entry name" value="BIFUNCTIONAL PROTEIN HLDE"/>
    <property type="match status" value="1"/>
</dbReference>
<dbReference type="PANTHER" id="PTHR46969:SF1">
    <property type="entry name" value="BIFUNCTIONAL PROTEIN HLDE"/>
    <property type="match status" value="1"/>
</dbReference>
<dbReference type="Pfam" id="PF01467">
    <property type="entry name" value="CTP_transf_like"/>
    <property type="match status" value="1"/>
</dbReference>
<dbReference type="Pfam" id="PF00294">
    <property type="entry name" value="PfkB"/>
    <property type="match status" value="1"/>
</dbReference>
<dbReference type="SUPFAM" id="SSF52374">
    <property type="entry name" value="Nucleotidylyl transferase"/>
    <property type="match status" value="1"/>
</dbReference>
<dbReference type="SUPFAM" id="SSF53613">
    <property type="entry name" value="Ribokinase-like"/>
    <property type="match status" value="1"/>
</dbReference>